<dbReference type="EMBL" id="BC087488">
    <property type="protein sequence ID" value="AAH87488.1"/>
    <property type="molecule type" value="mRNA"/>
</dbReference>
<dbReference type="EMBL" id="BC106235">
    <property type="protein sequence ID" value="AAI06236.1"/>
    <property type="molecule type" value="mRNA"/>
</dbReference>
<dbReference type="RefSeq" id="NP_001088805.1">
    <property type="nucleotide sequence ID" value="NM_001095336.1"/>
</dbReference>
<dbReference type="SMR" id="Q3KQF4"/>
<dbReference type="DNASU" id="496073"/>
<dbReference type="GeneID" id="496073"/>
<dbReference type="KEGG" id="xla:496073"/>
<dbReference type="AGR" id="Xenbase:XB-GENE-951965"/>
<dbReference type="CTD" id="496073"/>
<dbReference type="Xenbase" id="XB-GENE-951965">
    <property type="gene designation" value="lrrc69.L"/>
</dbReference>
<dbReference type="OrthoDB" id="660555at2759"/>
<dbReference type="Proteomes" id="UP000186698">
    <property type="component" value="Chromosome 6L"/>
</dbReference>
<dbReference type="Bgee" id="496073">
    <property type="expression patterns" value="Expressed in testis and 8 other cell types or tissues"/>
</dbReference>
<dbReference type="Gene3D" id="3.80.10.10">
    <property type="entry name" value="Ribonuclease Inhibitor"/>
    <property type="match status" value="2"/>
</dbReference>
<dbReference type="InterPro" id="IPR001611">
    <property type="entry name" value="Leu-rich_rpt"/>
</dbReference>
<dbReference type="InterPro" id="IPR003591">
    <property type="entry name" value="Leu-rich_rpt_typical-subtyp"/>
</dbReference>
<dbReference type="InterPro" id="IPR050715">
    <property type="entry name" value="LRR-SigEffector_domain"/>
</dbReference>
<dbReference type="InterPro" id="IPR032675">
    <property type="entry name" value="LRR_dom_sf"/>
</dbReference>
<dbReference type="InterPro" id="IPR055414">
    <property type="entry name" value="LRR_R13L4/SHOC2-like"/>
</dbReference>
<dbReference type="PANTHER" id="PTHR45752:SF187">
    <property type="entry name" value="LEUCINE-RICH REPEAT AND IQ DOMAIN-CONTAINING PROTEIN 4"/>
    <property type="match status" value="1"/>
</dbReference>
<dbReference type="PANTHER" id="PTHR45752">
    <property type="entry name" value="LEUCINE-RICH REPEAT-CONTAINING"/>
    <property type="match status" value="1"/>
</dbReference>
<dbReference type="Pfam" id="PF00560">
    <property type="entry name" value="LRR_1"/>
    <property type="match status" value="1"/>
</dbReference>
<dbReference type="Pfam" id="PF23598">
    <property type="entry name" value="LRR_14"/>
    <property type="match status" value="1"/>
</dbReference>
<dbReference type="SMART" id="SM00364">
    <property type="entry name" value="LRR_BAC"/>
    <property type="match status" value="6"/>
</dbReference>
<dbReference type="SMART" id="SM00369">
    <property type="entry name" value="LRR_TYP"/>
    <property type="match status" value="7"/>
</dbReference>
<dbReference type="SUPFAM" id="SSF52058">
    <property type="entry name" value="L domain-like"/>
    <property type="match status" value="1"/>
</dbReference>
<dbReference type="PROSITE" id="PS51450">
    <property type="entry name" value="LRR"/>
    <property type="match status" value="8"/>
</dbReference>
<reference key="1">
    <citation type="submission" date="2005-10" db="EMBL/GenBank/DDBJ databases">
        <authorList>
            <consortium name="NIH - Xenopus Gene Collection (XGC) project"/>
        </authorList>
    </citation>
    <scope>NUCLEOTIDE SEQUENCE [LARGE SCALE MRNA]</scope>
    <source>
        <tissue>Testis</tissue>
    </source>
</reference>
<accession>Q3KQF4</accession>
<accession>Q5PPU9</accession>
<keyword id="KW-0433">Leucine-rich repeat</keyword>
<keyword id="KW-1185">Reference proteome</keyword>
<keyword id="KW-0677">Repeat</keyword>
<comment type="similarity">
    <text evidence="1">Belongs to the LRRC69 family.</text>
</comment>
<gene>
    <name type="primary">lrrc69</name>
</gene>
<sequence length="345" mass="39486">MADGLILRAIRGKAKTLNLNGKRLQRVPVAVGCLISLTELQLKNNLLCRLPVELSALCRLRVLHLGNNHFEKVPEEIKYLKCLERLHLFGNRISEIPAAALDGLDNLLFLNLNNNLLEHLPREIYKLQSLETLSINNNHMKAIPKELCFLQNLQELHLANNQLDSLPDELSYLTNLKELRLSRNQLTGLPEGICKLIKLKILDVAGNFIRSFPSAMHRVPLTELYCEENPLLEKQPVFARQQEEILTLKEITARLILNHLRSRNSFFIEQIQQHPEARSVLSSRNICALCGTWFLDMWLECVTFVDVKKKMKTSSNLQLLPVRVLLCSYRCFNQKQAGIFGVAVQ</sequence>
<organism>
    <name type="scientific">Xenopus laevis</name>
    <name type="common">African clawed frog</name>
    <dbReference type="NCBI Taxonomy" id="8355"/>
    <lineage>
        <taxon>Eukaryota</taxon>
        <taxon>Metazoa</taxon>
        <taxon>Chordata</taxon>
        <taxon>Craniata</taxon>
        <taxon>Vertebrata</taxon>
        <taxon>Euteleostomi</taxon>
        <taxon>Amphibia</taxon>
        <taxon>Batrachia</taxon>
        <taxon>Anura</taxon>
        <taxon>Pipoidea</taxon>
        <taxon>Pipidae</taxon>
        <taxon>Xenopodinae</taxon>
        <taxon>Xenopus</taxon>
        <taxon>Xenopus</taxon>
    </lineage>
</organism>
<evidence type="ECO:0000305" key="1"/>
<name>LRC69_XENLA</name>
<protein>
    <recommendedName>
        <fullName>Leucine-rich repeat-containing protein 69</fullName>
    </recommendedName>
</protein>
<feature type="chain" id="PRO_0000336074" description="Leucine-rich repeat-containing protein 69">
    <location>
        <begin position="1"/>
        <end position="345"/>
    </location>
</feature>
<feature type="repeat" description="LRR 1">
    <location>
        <begin position="13"/>
        <end position="34"/>
    </location>
</feature>
<feature type="repeat" description="LRR 2">
    <location>
        <begin position="36"/>
        <end position="58"/>
    </location>
</feature>
<feature type="repeat" description="LRR 3">
    <location>
        <begin position="59"/>
        <end position="80"/>
    </location>
</feature>
<feature type="repeat" description="LRR 4">
    <location>
        <begin position="82"/>
        <end position="103"/>
    </location>
</feature>
<feature type="repeat" description="LRR 5">
    <location>
        <begin position="106"/>
        <end position="127"/>
    </location>
</feature>
<feature type="repeat" description="LRR 6">
    <location>
        <begin position="129"/>
        <end position="151"/>
    </location>
</feature>
<feature type="repeat" description="LRR 7">
    <location>
        <begin position="152"/>
        <end position="173"/>
    </location>
</feature>
<feature type="repeat" description="LRR 8">
    <location>
        <begin position="175"/>
        <end position="196"/>
    </location>
</feature>
<feature type="repeat" description="LRR 9">
    <location>
        <begin position="198"/>
        <end position="219"/>
    </location>
</feature>
<feature type="repeat" description="LRR 10">
    <location>
        <begin position="220"/>
        <end position="241"/>
    </location>
</feature>
<proteinExistence type="evidence at transcript level"/>